<feature type="signal peptide" evidence="2">
    <location>
        <begin position="1"/>
        <end position="19"/>
    </location>
</feature>
<feature type="chain" id="PRO_0000247163" description="Protein O-glucosyltransferase 2">
    <location>
        <begin position="20"/>
        <end position="502"/>
    </location>
</feature>
<feature type="repeat" description="Filamin">
    <location>
        <begin position="24"/>
        <end position="130"/>
    </location>
</feature>
<feature type="short sequence motif" description="Prevents secretion from ER" evidence="3">
    <location>
        <begin position="499"/>
        <end position="502"/>
    </location>
</feature>
<feature type="glycosylation site" description="N-linked (GlcNAc...) asparagine" evidence="2">
    <location>
        <position position="302"/>
    </location>
</feature>
<feature type="glycosylation site" description="N-linked (GlcNAc...) asparagine" evidence="2">
    <location>
        <position position="414"/>
    </location>
</feature>
<feature type="sequence variant" id="VAR_027080" description="In dbSNP:rs1047740." evidence="4">
    <original>I</original>
    <variation>V</variation>
    <location>
        <position position="114"/>
    </location>
</feature>
<feature type="sequence conflict" description="In Ref. 2; BAD96287." evidence="8" ref="2">
    <original>N</original>
    <variation>S</variation>
    <location>
        <position position="109"/>
    </location>
</feature>
<feature type="sequence conflict" description="In Ref. 2; BAD96287." evidence="8" ref="2">
    <original>D</original>
    <variation>G</variation>
    <location>
        <position position="163"/>
    </location>
</feature>
<feature type="turn" evidence="11">
    <location>
        <begin position="29"/>
        <end position="31"/>
    </location>
</feature>
<feature type="strand" evidence="11">
    <location>
        <begin position="39"/>
        <end position="42"/>
    </location>
</feature>
<feature type="strand" evidence="11">
    <location>
        <begin position="72"/>
        <end position="76"/>
    </location>
</feature>
<feature type="strand" evidence="11">
    <location>
        <begin position="88"/>
        <end position="90"/>
    </location>
</feature>
<feature type="strand" evidence="11">
    <location>
        <begin position="93"/>
        <end position="95"/>
    </location>
</feature>
<feature type="strand" evidence="11">
    <location>
        <begin position="98"/>
        <end position="100"/>
    </location>
</feature>
<feature type="strand" evidence="11">
    <location>
        <begin position="111"/>
        <end position="118"/>
    </location>
</feature>
<feature type="strand" evidence="11">
    <location>
        <begin position="125"/>
        <end position="127"/>
    </location>
</feature>
<accession>Q6UW63</accession>
<accession>Q53HL3</accession>
<accession>Q9BVD2</accession>
<sequence length="502" mass="58043">MFGTLLLYCFFLATVPALAETGGERQLSPEKSEIWGPGLKADVVLPARYFYIQAVDTSGNKFTSSPGEKVFQVKVSAPEEQFTRVGVQVLDRKDGSFIVRYRMYASYKNLKVEIKFQGQHVAKSPYILKGPVYHENCDCPLQDSAAWLREMNCPETIAQIQRDLAHFPAVDPEKIAVEIPKRFGQRQSLCHYTLKDNKVYIKTHGEHVGFRIFMDAILLSLTRKVKMPDVELFVNLGDWPLEKKKSNSNIHPIFSWCGSTDSKDIVMPTYDLTDSVLETMGRVSLDMMSVQANTGPPWESKNSTAVWRGRDSRKERLELVKLSRKHPELIDAAFTNFFFFKHDENLYGPIVKHISFFDFFKHKYQINIDGTVAAYRLPYLLVGDSVVLKQDSIYYEHFYNELQPWKHYIPVKSNLSDLLEKLKWAKDHDEEAKKIAKAGQEFARNNLMGDDIFCYYFKLFQEYANLQVSEPQIREGMKRVEPQTEDDLFPCTCHRKKTKDEL</sequence>
<proteinExistence type="evidence at protein level"/>
<gene>
    <name evidence="7 10" type="primary">POGLUT2</name>
    <name type="synonym">EP58</name>
    <name evidence="10" type="synonym">KDELC1</name>
    <name type="ORF">UNQ1910/PRO4357</name>
</gene>
<reference key="1">
    <citation type="journal article" date="2003" name="Genome Res.">
        <title>The secreted protein discovery initiative (SPDI), a large-scale effort to identify novel human secreted and transmembrane proteins: a bioinformatics assessment.</title>
        <authorList>
            <person name="Clark H.F."/>
            <person name="Gurney A.L."/>
            <person name="Abaya E."/>
            <person name="Baker K."/>
            <person name="Baldwin D.T."/>
            <person name="Brush J."/>
            <person name="Chen J."/>
            <person name="Chow B."/>
            <person name="Chui C."/>
            <person name="Crowley C."/>
            <person name="Currell B."/>
            <person name="Deuel B."/>
            <person name="Dowd P."/>
            <person name="Eaton D."/>
            <person name="Foster J.S."/>
            <person name="Grimaldi C."/>
            <person name="Gu Q."/>
            <person name="Hass P.E."/>
            <person name="Heldens S."/>
            <person name="Huang A."/>
            <person name="Kim H.S."/>
            <person name="Klimowski L."/>
            <person name="Jin Y."/>
            <person name="Johnson S."/>
            <person name="Lee J."/>
            <person name="Lewis L."/>
            <person name="Liao D."/>
            <person name="Mark M.R."/>
            <person name="Robbie E."/>
            <person name="Sanchez C."/>
            <person name="Schoenfeld J."/>
            <person name="Seshagiri S."/>
            <person name="Simmons L."/>
            <person name="Singh J."/>
            <person name="Smith V."/>
            <person name="Stinson J."/>
            <person name="Vagts A."/>
            <person name="Vandlen R.L."/>
            <person name="Watanabe C."/>
            <person name="Wieand D."/>
            <person name="Woods K."/>
            <person name="Xie M.-H."/>
            <person name="Yansura D.G."/>
            <person name="Yi S."/>
            <person name="Yu G."/>
            <person name="Yuan J."/>
            <person name="Zhang M."/>
            <person name="Zhang Z."/>
            <person name="Goddard A.D."/>
            <person name="Wood W.I."/>
            <person name="Godowski P.J."/>
            <person name="Gray A.M."/>
        </authorList>
    </citation>
    <scope>NUCLEOTIDE SEQUENCE [LARGE SCALE MRNA]</scope>
</reference>
<reference key="2">
    <citation type="submission" date="2005-04" db="EMBL/GenBank/DDBJ databases">
        <authorList>
            <person name="Suzuki Y."/>
            <person name="Sugano S."/>
            <person name="Totoki Y."/>
            <person name="Toyoda A."/>
            <person name="Takeda T."/>
            <person name="Sakaki Y."/>
            <person name="Tanaka A."/>
            <person name="Yokoyama S."/>
        </authorList>
    </citation>
    <scope>NUCLEOTIDE SEQUENCE [LARGE SCALE MRNA]</scope>
    <source>
        <tissue>Coronary arterial endothelium</tissue>
    </source>
</reference>
<reference key="3">
    <citation type="journal article" date="2004" name="Nature">
        <title>The DNA sequence and analysis of human chromosome 13.</title>
        <authorList>
            <person name="Dunham A."/>
            <person name="Matthews L.H."/>
            <person name="Burton J."/>
            <person name="Ashurst J.L."/>
            <person name="Howe K.L."/>
            <person name="Ashcroft K.J."/>
            <person name="Beare D.M."/>
            <person name="Burford D.C."/>
            <person name="Hunt S.E."/>
            <person name="Griffiths-Jones S."/>
            <person name="Jones M.C."/>
            <person name="Keenan S.J."/>
            <person name="Oliver K."/>
            <person name="Scott C.E."/>
            <person name="Ainscough R."/>
            <person name="Almeida J.P."/>
            <person name="Ambrose K.D."/>
            <person name="Andrews D.T."/>
            <person name="Ashwell R.I.S."/>
            <person name="Babbage A.K."/>
            <person name="Bagguley C.L."/>
            <person name="Bailey J."/>
            <person name="Bannerjee R."/>
            <person name="Barlow K.F."/>
            <person name="Bates K."/>
            <person name="Beasley H."/>
            <person name="Bird C.P."/>
            <person name="Bray-Allen S."/>
            <person name="Brown A.J."/>
            <person name="Brown J.Y."/>
            <person name="Burrill W."/>
            <person name="Carder C."/>
            <person name="Carter N.P."/>
            <person name="Chapman J.C."/>
            <person name="Clamp M.E."/>
            <person name="Clark S.Y."/>
            <person name="Clarke G."/>
            <person name="Clee C.M."/>
            <person name="Clegg S.C."/>
            <person name="Cobley V."/>
            <person name="Collins J.E."/>
            <person name="Corby N."/>
            <person name="Coville G.J."/>
            <person name="Deloukas P."/>
            <person name="Dhami P."/>
            <person name="Dunham I."/>
            <person name="Dunn M."/>
            <person name="Earthrowl M.E."/>
            <person name="Ellington A.G."/>
            <person name="Faulkner L."/>
            <person name="Frankish A.G."/>
            <person name="Frankland J."/>
            <person name="French L."/>
            <person name="Garner P."/>
            <person name="Garnett J."/>
            <person name="Gilbert J.G.R."/>
            <person name="Gilson C.J."/>
            <person name="Ghori J."/>
            <person name="Grafham D.V."/>
            <person name="Gribble S.M."/>
            <person name="Griffiths C."/>
            <person name="Hall R.E."/>
            <person name="Hammond S."/>
            <person name="Harley J.L."/>
            <person name="Hart E.A."/>
            <person name="Heath P.D."/>
            <person name="Howden P.J."/>
            <person name="Huckle E.J."/>
            <person name="Hunt P.J."/>
            <person name="Hunt A.R."/>
            <person name="Johnson C."/>
            <person name="Johnson D."/>
            <person name="Kay M."/>
            <person name="Kimberley A.M."/>
            <person name="King A."/>
            <person name="Laird G.K."/>
            <person name="Langford C.J."/>
            <person name="Lawlor S."/>
            <person name="Leongamornlert D.A."/>
            <person name="Lloyd D.M."/>
            <person name="Lloyd C."/>
            <person name="Loveland J.E."/>
            <person name="Lovell J."/>
            <person name="Martin S."/>
            <person name="Mashreghi-Mohammadi M."/>
            <person name="McLaren S.J."/>
            <person name="McMurray A."/>
            <person name="Milne S."/>
            <person name="Moore M.J.F."/>
            <person name="Nickerson T."/>
            <person name="Palmer S.A."/>
            <person name="Pearce A.V."/>
            <person name="Peck A.I."/>
            <person name="Pelan S."/>
            <person name="Phillimore B."/>
            <person name="Porter K.M."/>
            <person name="Rice C.M."/>
            <person name="Searle S."/>
            <person name="Sehra H.K."/>
            <person name="Shownkeen R."/>
            <person name="Skuce C.D."/>
            <person name="Smith M."/>
            <person name="Steward C.A."/>
            <person name="Sycamore N."/>
            <person name="Tester J."/>
            <person name="Thomas D.W."/>
            <person name="Tracey A."/>
            <person name="Tromans A."/>
            <person name="Tubby B."/>
            <person name="Wall M."/>
            <person name="Wallis J.M."/>
            <person name="West A.P."/>
            <person name="Whitehead S.L."/>
            <person name="Willey D.L."/>
            <person name="Wilming L."/>
            <person name="Wray P.W."/>
            <person name="Wright M.W."/>
            <person name="Young L."/>
            <person name="Coulson A."/>
            <person name="Durbin R.M."/>
            <person name="Hubbard T."/>
            <person name="Sulston J.E."/>
            <person name="Beck S."/>
            <person name="Bentley D.R."/>
            <person name="Rogers J."/>
            <person name="Ross M.T."/>
        </authorList>
    </citation>
    <scope>NUCLEOTIDE SEQUENCE [LARGE SCALE GENOMIC DNA]</scope>
</reference>
<reference key="4">
    <citation type="journal article" date="2004" name="Genome Res.">
        <title>The status, quality, and expansion of the NIH full-length cDNA project: the Mammalian Gene Collection (MGC).</title>
        <authorList>
            <consortium name="The MGC Project Team"/>
        </authorList>
    </citation>
    <scope>NUCLEOTIDE SEQUENCE [LARGE SCALE MRNA]</scope>
    <scope>VARIANT VAL-114</scope>
    <source>
        <tissue>Cervix carcinoma</tissue>
    </source>
</reference>
<reference key="5">
    <citation type="journal article" date="2011" name="BMC Syst. Biol.">
        <title>Initial characterization of the human central proteome.</title>
        <authorList>
            <person name="Burkard T.R."/>
            <person name="Planyavsky M."/>
            <person name="Kaupe I."/>
            <person name="Breitwieser F.P."/>
            <person name="Buerckstuemmer T."/>
            <person name="Bennett K.L."/>
            <person name="Superti-Furga G."/>
            <person name="Colinge J."/>
        </authorList>
    </citation>
    <scope>IDENTIFICATION BY MASS SPECTROMETRY [LARGE SCALE ANALYSIS]</scope>
</reference>
<reference key="6">
    <citation type="journal article" date="2018" name="Proc. Natl. Acad. Sci. U.S.A.">
        <title>Two novel protein O-glucosyltransferases that modify sites distinct from POGLUT1 and affect Notch trafficking and signaling.</title>
        <authorList>
            <person name="Takeuchi H."/>
            <person name="Schneider M."/>
            <person name="Williamson D.B."/>
            <person name="Ito A."/>
            <person name="Takeuchi M."/>
            <person name="Handford P.A."/>
            <person name="Haltiwanger R.S."/>
        </authorList>
    </citation>
    <scope>FUNCTION</scope>
    <scope>CATALYTIC ACTIVITY</scope>
    <scope>PATHWAY</scope>
    <scope>SUBSTRATE SPECIFICITY</scope>
</reference>
<reference key="7">
    <citation type="journal article" date="2021" name="J. Biol. Chem.">
        <title>POGLUT2 and POGLUT3 O-glucosylate multiple EGF repeats in fibrillin-1, -2, and LTBP1 and promote secretion of fibrillin-1.</title>
        <authorList>
            <person name="Williamson D.B."/>
            <person name="Sohn C.J."/>
            <person name="Ito A."/>
            <person name="Haltiwanger R.S."/>
        </authorList>
    </citation>
    <scope>FUNCTION</scope>
</reference>
<reference key="8">
    <citation type="submission" date="2006-09" db="PDB data bank">
        <title>Solution structure of the filamin domain from human BK158_1 protein.</title>
        <authorList>
            <consortium name="RIKEN structural genomics initiative (RSGI)"/>
        </authorList>
    </citation>
    <scope>STRUCTURE BY NMR OF 20-130</scope>
</reference>
<keyword id="KW-0002">3D-structure</keyword>
<keyword id="KW-0256">Endoplasmic reticulum</keyword>
<keyword id="KW-0325">Glycoprotein</keyword>
<keyword id="KW-0328">Glycosyltransferase</keyword>
<keyword id="KW-1267">Proteomics identification</keyword>
<keyword id="KW-1185">Reference proteome</keyword>
<keyword id="KW-0732">Signal</keyword>
<keyword id="KW-0808">Transferase</keyword>
<protein>
    <recommendedName>
        <fullName evidence="9">Protein O-glucosyltransferase 2</fullName>
        <ecNumber evidence="5">2.4.1.-</ecNumber>
    </recommendedName>
    <alternativeName>
        <fullName>Endoplasmic reticulum resident protein 58</fullName>
        <shortName>ER protein 58</shortName>
        <shortName>ERp58</shortName>
    </alternativeName>
    <alternativeName>
        <fullName evidence="10">KDEL motif-containing protein 1</fullName>
    </alternativeName>
    <alternativeName>
        <fullName evidence="9">Protein O-xylosyltransferase POGLUT2</fullName>
        <ecNumber evidence="5">2.4.2.-</ecNumber>
    </alternativeName>
</protein>
<organism>
    <name type="scientific">Homo sapiens</name>
    <name type="common">Human</name>
    <dbReference type="NCBI Taxonomy" id="9606"/>
    <lineage>
        <taxon>Eukaryota</taxon>
        <taxon>Metazoa</taxon>
        <taxon>Chordata</taxon>
        <taxon>Craniata</taxon>
        <taxon>Vertebrata</taxon>
        <taxon>Euteleostomi</taxon>
        <taxon>Mammalia</taxon>
        <taxon>Eutheria</taxon>
        <taxon>Euarchontoglires</taxon>
        <taxon>Primates</taxon>
        <taxon>Haplorrhini</taxon>
        <taxon>Catarrhini</taxon>
        <taxon>Hominidae</taxon>
        <taxon>Homo</taxon>
    </lineage>
</organism>
<dbReference type="EC" id="2.4.1.-" evidence="5"/>
<dbReference type="EC" id="2.4.2.-" evidence="5"/>
<dbReference type="EMBL" id="AY358959">
    <property type="protein sequence ID" value="AAQ89318.1"/>
    <property type="molecule type" value="mRNA"/>
</dbReference>
<dbReference type="EMBL" id="AK222567">
    <property type="protein sequence ID" value="BAD96287.1"/>
    <property type="molecule type" value="mRNA"/>
</dbReference>
<dbReference type="EMBL" id="AL157769">
    <property type="status" value="NOT_ANNOTATED_CDS"/>
    <property type="molecule type" value="Genomic_DNA"/>
</dbReference>
<dbReference type="EMBL" id="BC001297">
    <property type="protein sequence ID" value="AAH01297.1"/>
    <property type="molecule type" value="mRNA"/>
</dbReference>
<dbReference type="CCDS" id="CCDS9504.1"/>
<dbReference type="RefSeq" id="NP_001305661.1">
    <property type="nucleotide sequence ID" value="NM_001318732.1"/>
</dbReference>
<dbReference type="RefSeq" id="NP_076994.2">
    <property type="nucleotide sequence ID" value="NM_024089.3"/>
</dbReference>
<dbReference type="PDB" id="2DI7">
    <property type="method" value="NMR"/>
    <property type="chains" value="A=20-130"/>
</dbReference>
<dbReference type="PDBsum" id="2DI7"/>
<dbReference type="BMRB" id="Q6UW63"/>
<dbReference type="SMR" id="Q6UW63"/>
<dbReference type="BioGRID" id="122521">
    <property type="interactions" value="136"/>
</dbReference>
<dbReference type="FunCoup" id="Q6UW63">
    <property type="interactions" value="1914"/>
</dbReference>
<dbReference type="IntAct" id="Q6UW63">
    <property type="interactions" value="53"/>
</dbReference>
<dbReference type="STRING" id="9606.ENSP00000365172"/>
<dbReference type="CAZy" id="GT90">
    <property type="family name" value="Glycosyltransferase Family 90"/>
</dbReference>
<dbReference type="GlyConnect" id="1430">
    <property type="glycosylation" value="2 N-Linked glycans (1 site)"/>
</dbReference>
<dbReference type="GlyCosmos" id="Q6UW63">
    <property type="glycosylation" value="2 sites, 2 glycans"/>
</dbReference>
<dbReference type="GlyGen" id="Q6UW63">
    <property type="glycosylation" value="4 sites, 4 N-linked glycans (2 sites), 1 O-linked glycan (2 sites)"/>
</dbReference>
<dbReference type="iPTMnet" id="Q6UW63"/>
<dbReference type="PhosphoSitePlus" id="Q6UW63"/>
<dbReference type="BioMuta" id="KDELC1"/>
<dbReference type="DMDM" id="74749382"/>
<dbReference type="jPOST" id="Q6UW63"/>
<dbReference type="MassIVE" id="Q6UW63"/>
<dbReference type="PaxDb" id="9606-ENSP00000365172"/>
<dbReference type="PeptideAtlas" id="Q6UW63"/>
<dbReference type="ProteomicsDB" id="67452"/>
<dbReference type="Pumba" id="Q6UW63"/>
<dbReference type="Antibodypedia" id="54168">
    <property type="antibodies" value="123 antibodies from 13 providers"/>
</dbReference>
<dbReference type="DNASU" id="79070"/>
<dbReference type="Ensembl" id="ENST00000376004.5">
    <property type="protein sequence ID" value="ENSP00000365172.4"/>
    <property type="gene ID" value="ENSG00000134901.14"/>
</dbReference>
<dbReference type="GeneID" id="79070"/>
<dbReference type="KEGG" id="hsa:79070"/>
<dbReference type="MANE-Select" id="ENST00000376004.5">
    <property type="protein sequence ID" value="ENSP00000365172.4"/>
    <property type="RefSeq nucleotide sequence ID" value="NM_024089.3"/>
    <property type="RefSeq protein sequence ID" value="NP_076994.2"/>
</dbReference>
<dbReference type="UCSC" id="uc001vpq.5">
    <property type="organism name" value="human"/>
</dbReference>
<dbReference type="AGR" id="HGNC:19350"/>
<dbReference type="CTD" id="79070"/>
<dbReference type="DisGeNET" id="79070"/>
<dbReference type="GeneCards" id="POGLUT2"/>
<dbReference type="HGNC" id="HGNC:19350">
    <property type="gene designation" value="POGLUT2"/>
</dbReference>
<dbReference type="HPA" id="ENSG00000134901">
    <property type="expression patterns" value="Low tissue specificity"/>
</dbReference>
<dbReference type="MIM" id="611613">
    <property type="type" value="gene"/>
</dbReference>
<dbReference type="neXtProt" id="NX_Q6UW63"/>
<dbReference type="OpenTargets" id="ENSG00000134901"/>
<dbReference type="PharmGKB" id="PA134974174"/>
<dbReference type="VEuPathDB" id="HostDB:ENSG00000134901"/>
<dbReference type="eggNOG" id="KOG2458">
    <property type="taxonomic scope" value="Eukaryota"/>
</dbReference>
<dbReference type="GeneTree" id="ENSGT00940000158318"/>
<dbReference type="HOGENOM" id="CLU_041919_0_0_1"/>
<dbReference type="InParanoid" id="Q6UW63"/>
<dbReference type="OMA" id="MFMDATL"/>
<dbReference type="OrthoDB" id="541052at2759"/>
<dbReference type="PAN-GO" id="Q6UW63">
    <property type="GO annotations" value="2 GO annotations based on evolutionary models"/>
</dbReference>
<dbReference type="PhylomeDB" id="Q6UW63"/>
<dbReference type="TreeFam" id="TF323280"/>
<dbReference type="PathwayCommons" id="Q6UW63"/>
<dbReference type="SignaLink" id="Q6UW63"/>
<dbReference type="UniPathway" id="UPA00378"/>
<dbReference type="BioGRID-ORCS" id="79070">
    <property type="hits" value="24 hits in 1156 CRISPR screens"/>
</dbReference>
<dbReference type="ChiTaRS" id="KDELC1">
    <property type="organism name" value="human"/>
</dbReference>
<dbReference type="EvolutionaryTrace" id="Q6UW63"/>
<dbReference type="GenomeRNAi" id="79070"/>
<dbReference type="Pharos" id="Q6UW63">
    <property type="development level" value="Tbio"/>
</dbReference>
<dbReference type="PRO" id="PR:Q6UW63"/>
<dbReference type="Proteomes" id="UP000005640">
    <property type="component" value="Chromosome 13"/>
</dbReference>
<dbReference type="RNAct" id="Q6UW63">
    <property type="molecule type" value="protein"/>
</dbReference>
<dbReference type="Bgee" id="ENSG00000134901">
    <property type="expression patterns" value="Expressed in stromal cell of endometrium and 152 other cell types or tissues"/>
</dbReference>
<dbReference type="GO" id="GO:0005829">
    <property type="term" value="C:cytosol"/>
    <property type="evidence" value="ECO:0000314"/>
    <property type="project" value="HPA"/>
</dbReference>
<dbReference type="GO" id="GO:0012505">
    <property type="term" value="C:endomembrane system"/>
    <property type="evidence" value="ECO:0000318"/>
    <property type="project" value="GO_Central"/>
</dbReference>
<dbReference type="GO" id="GO:0005788">
    <property type="term" value="C:endoplasmic reticulum lumen"/>
    <property type="evidence" value="ECO:0000250"/>
    <property type="project" value="UniProtKB"/>
</dbReference>
<dbReference type="GO" id="GO:0005654">
    <property type="term" value="C:nucleoplasm"/>
    <property type="evidence" value="ECO:0000314"/>
    <property type="project" value="HPA"/>
</dbReference>
<dbReference type="GO" id="GO:0140561">
    <property type="term" value="F:EGF-domain serine glucosyltransferase activity"/>
    <property type="evidence" value="ECO:0007669"/>
    <property type="project" value="RHEA"/>
</dbReference>
<dbReference type="GO" id="GO:0140562">
    <property type="term" value="F:EGF-domain serine xylosyltransferase activity"/>
    <property type="evidence" value="ECO:0007669"/>
    <property type="project" value="RHEA"/>
</dbReference>
<dbReference type="GO" id="GO:0046527">
    <property type="term" value="F:glucosyltransferase activity"/>
    <property type="evidence" value="ECO:0000318"/>
    <property type="project" value="GO_Central"/>
</dbReference>
<dbReference type="GO" id="GO:0035251">
    <property type="term" value="F:UDP-glucosyltransferase activity"/>
    <property type="evidence" value="ECO:0000314"/>
    <property type="project" value="UniProtKB"/>
</dbReference>
<dbReference type="GO" id="GO:0035252">
    <property type="term" value="F:UDP-xylosyltransferase activity"/>
    <property type="evidence" value="ECO:0000314"/>
    <property type="project" value="UniProtKB"/>
</dbReference>
<dbReference type="GO" id="GO:0018242">
    <property type="term" value="P:protein O-linked glycosylation via serine"/>
    <property type="evidence" value="ECO:0000314"/>
    <property type="project" value="UniProtKB"/>
</dbReference>
<dbReference type="FunFam" id="2.60.40.10:FF:000419">
    <property type="entry name" value="KDEL (Lys-Asp-Glu-Leu) containing 1"/>
    <property type="match status" value="1"/>
</dbReference>
<dbReference type="Gene3D" id="2.60.40.10">
    <property type="entry name" value="Immunoglobulins"/>
    <property type="match status" value="1"/>
</dbReference>
<dbReference type="InterPro" id="IPR006598">
    <property type="entry name" value="CAP10"/>
</dbReference>
<dbReference type="InterPro" id="IPR017868">
    <property type="entry name" value="Filamin/ABP280_repeat-like"/>
</dbReference>
<dbReference type="InterPro" id="IPR001298">
    <property type="entry name" value="Filamin/ABP280_rpt"/>
</dbReference>
<dbReference type="InterPro" id="IPR013783">
    <property type="entry name" value="Ig-like_fold"/>
</dbReference>
<dbReference type="InterPro" id="IPR014756">
    <property type="entry name" value="Ig_E-set"/>
</dbReference>
<dbReference type="InterPro" id="IPR051091">
    <property type="entry name" value="O-Glucosyltr/Glycosyltrsf_90"/>
</dbReference>
<dbReference type="PANTHER" id="PTHR12203">
    <property type="entry name" value="KDEL LYS-ASP-GLU-LEU CONTAINING - RELATED"/>
    <property type="match status" value="1"/>
</dbReference>
<dbReference type="PANTHER" id="PTHR12203:SF21">
    <property type="entry name" value="PROTEIN O-GLUCOSYLTRANSFERASE 2"/>
    <property type="match status" value="1"/>
</dbReference>
<dbReference type="Pfam" id="PF00630">
    <property type="entry name" value="Filamin"/>
    <property type="match status" value="1"/>
</dbReference>
<dbReference type="Pfam" id="PF05686">
    <property type="entry name" value="Glyco_transf_90"/>
    <property type="match status" value="1"/>
</dbReference>
<dbReference type="SMART" id="SM00672">
    <property type="entry name" value="CAP10"/>
    <property type="match status" value="1"/>
</dbReference>
<dbReference type="SMART" id="SM00557">
    <property type="entry name" value="IG_FLMN"/>
    <property type="match status" value="1"/>
</dbReference>
<dbReference type="SUPFAM" id="SSF81296">
    <property type="entry name" value="E set domains"/>
    <property type="match status" value="1"/>
</dbReference>
<dbReference type="PROSITE" id="PS00014">
    <property type="entry name" value="ER_TARGET"/>
    <property type="match status" value="1"/>
</dbReference>
<dbReference type="PROSITE" id="PS50194">
    <property type="entry name" value="FILAMIN_REPEAT"/>
    <property type="match status" value="1"/>
</dbReference>
<comment type="function">
    <text evidence="5 6">Protein glucosyltransferase that catalyzes the transfer of glucose from UDP-glucose to a serine residue within the consensus sequence peptide C-X-N-T-X-G-S-F-X-C (PubMed:30127001). Can also catalyze the transfer of xylose from UDP-xylose but less efficiently (PubMed:30127001). Specifically targets extracellular EGF repeats of proteins such as NOTCH1, NOTCH3, FBN1, FBN2 and LTBP1 (PubMed:30127001, PubMed:34411563). May regulate the transport of NOTCH1 and NOTCH3 to the plasma membrane and thereby the Notch signaling pathway (PubMed:30127001).</text>
</comment>
<comment type="catalytic activity">
    <reaction evidence="5">
        <text>L-seryl-[EGF-like domain protein] + UDP-alpha-D-glucose = 3-O-(beta-D-glucosyl)-L-seryl-[EGF-like domain protein] + UDP + H(+)</text>
        <dbReference type="Rhea" id="RHEA:58116"/>
        <dbReference type="Rhea" id="RHEA-COMP:14610"/>
        <dbReference type="Rhea" id="RHEA-COMP:16010"/>
        <dbReference type="ChEBI" id="CHEBI:15378"/>
        <dbReference type="ChEBI" id="CHEBI:29999"/>
        <dbReference type="ChEBI" id="CHEBI:58223"/>
        <dbReference type="ChEBI" id="CHEBI:58885"/>
        <dbReference type="ChEBI" id="CHEBI:140576"/>
    </reaction>
</comment>
<comment type="catalytic activity">
    <reaction evidence="5">
        <text>L-seryl-[EGF-like domain protein] + UDP-alpha-D-xylose = 3-O-(beta-D-xylosyl)-L-seryl-[EGF-like domain protein] + UDP + H(+)</text>
        <dbReference type="Rhea" id="RHEA:62016"/>
        <dbReference type="Rhea" id="RHEA-COMP:16010"/>
        <dbReference type="Rhea" id="RHEA-COMP:16011"/>
        <dbReference type="ChEBI" id="CHEBI:15378"/>
        <dbReference type="ChEBI" id="CHEBI:29999"/>
        <dbReference type="ChEBI" id="CHEBI:57632"/>
        <dbReference type="ChEBI" id="CHEBI:58223"/>
        <dbReference type="ChEBI" id="CHEBI:132085"/>
    </reaction>
</comment>
<comment type="pathway">
    <text evidence="5">Protein modification; protein glycosylation.</text>
</comment>
<comment type="subcellular location">
    <subcellularLocation>
        <location evidence="3">Endoplasmic reticulum lumen</location>
    </subcellularLocation>
</comment>
<comment type="PTM">
    <text evidence="1">N-glycosylated.</text>
</comment>
<comment type="similarity">
    <text evidence="8">Belongs to the KDELC family.</text>
</comment>
<name>PLGT2_HUMAN</name>
<evidence type="ECO:0000250" key="1">
    <source>
        <dbReference type="UniProtKB" id="Q9JHP7"/>
    </source>
</evidence>
<evidence type="ECO:0000255" key="2"/>
<evidence type="ECO:0000255" key="3">
    <source>
        <dbReference type="PROSITE-ProRule" id="PRU10138"/>
    </source>
</evidence>
<evidence type="ECO:0000269" key="4">
    <source>
    </source>
</evidence>
<evidence type="ECO:0000269" key="5">
    <source>
    </source>
</evidence>
<evidence type="ECO:0000269" key="6">
    <source>
    </source>
</evidence>
<evidence type="ECO:0000303" key="7">
    <source>
    </source>
</evidence>
<evidence type="ECO:0000305" key="8"/>
<evidence type="ECO:0000305" key="9">
    <source>
    </source>
</evidence>
<evidence type="ECO:0000312" key="10">
    <source>
        <dbReference type="HGNC" id="HGNC:19350"/>
    </source>
</evidence>
<evidence type="ECO:0007829" key="11">
    <source>
        <dbReference type="PDB" id="2DI7"/>
    </source>
</evidence>